<keyword id="KW-1185">Reference proteome</keyword>
<sequence length="253" mass="27427">MTVVPGAPSRPASAVSRPSYRQCVQASAQTSARRYSFPSYRRPPAEKLVFPVLLGILTLLLSACQTASASGYNEPRGYDRATLKLVFSMDLGMCLNRFTYDSKLAPSRPQVVACDSREARIRNDGFHANAPSCMRIDYELITQNHRAYYCLKYLVRVGYCYPAVTTPGKPPSVLLYAPSACDESLPSPRVATALVPGTRSANREFSRFVVTEIKSLGAGGRCDSASVSLQPPEEIEGPAIPPASSQLVCVAPK</sequence>
<feature type="chain" id="PRO_0000103848" description="Uncharacterized protein Mb1459c">
    <location>
        <begin position="1"/>
        <end position="253"/>
    </location>
</feature>
<accession>P64852</accession>
<accession>A0A1R3XYA4</accession>
<accession>O08160</accession>
<accession>P71693</accession>
<accession>X2BHK9</accession>
<protein>
    <recommendedName>
        <fullName>Uncharacterized protein Mb1459c</fullName>
    </recommendedName>
</protein>
<organism>
    <name type="scientific">Mycobacterium bovis (strain ATCC BAA-935 / AF2122/97)</name>
    <dbReference type="NCBI Taxonomy" id="233413"/>
    <lineage>
        <taxon>Bacteria</taxon>
        <taxon>Bacillati</taxon>
        <taxon>Actinomycetota</taxon>
        <taxon>Actinomycetes</taxon>
        <taxon>Mycobacteriales</taxon>
        <taxon>Mycobacteriaceae</taxon>
        <taxon>Mycobacterium</taxon>
        <taxon>Mycobacterium tuberculosis complex</taxon>
    </lineage>
</organism>
<dbReference type="EMBL" id="LT708304">
    <property type="protein sequence ID" value="SIU00062.1"/>
    <property type="molecule type" value="Genomic_DNA"/>
</dbReference>
<dbReference type="RefSeq" id="NP_855111.1">
    <property type="nucleotide sequence ID" value="NC_002945.3"/>
</dbReference>
<dbReference type="RefSeq" id="WP_003407359.1">
    <property type="nucleotide sequence ID" value="NC_002945.4"/>
</dbReference>
<dbReference type="SMR" id="P64852"/>
<dbReference type="KEGG" id="mbo:BQ2027_MB1459C"/>
<dbReference type="PATRIC" id="fig|233413.5.peg.1594"/>
<dbReference type="Proteomes" id="UP000001419">
    <property type="component" value="Chromosome"/>
</dbReference>
<reference key="1">
    <citation type="journal article" date="2003" name="Proc. Natl. Acad. Sci. U.S.A.">
        <title>The complete genome sequence of Mycobacterium bovis.</title>
        <authorList>
            <person name="Garnier T."/>
            <person name="Eiglmeier K."/>
            <person name="Camus J.-C."/>
            <person name="Medina N."/>
            <person name="Mansoor H."/>
            <person name="Pryor M."/>
            <person name="Duthoy S."/>
            <person name="Grondin S."/>
            <person name="Lacroix C."/>
            <person name="Monsempe C."/>
            <person name="Simon S."/>
            <person name="Harris B."/>
            <person name="Atkin R."/>
            <person name="Doggett J."/>
            <person name="Mayes R."/>
            <person name="Keating L."/>
            <person name="Wheeler P.R."/>
            <person name="Parkhill J."/>
            <person name="Barrell B.G."/>
            <person name="Cole S.T."/>
            <person name="Gordon S.V."/>
            <person name="Hewinson R.G."/>
        </authorList>
    </citation>
    <scope>NUCLEOTIDE SEQUENCE [LARGE SCALE GENOMIC DNA]</scope>
    <source>
        <strain>ATCC BAA-935 / AF2122/97</strain>
    </source>
</reference>
<reference key="2">
    <citation type="journal article" date="2017" name="Genome Announc.">
        <title>Updated reference genome sequence and annotation of Mycobacterium bovis AF2122/97.</title>
        <authorList>
            <person name="Malone K.M."/>
            <person name="Farrell D."/>
            <person name="Stuber T.P."/>
            <person name="Schubert O.T."/>
            <person name="Aebersold R."/>
            <person name="Robbe-Austerman S."/>
            <person name="Gordon S.V."/>
        </authorList>
    </citation>
    <scope>NUCLEOTIDE SEQUENCE [LARGE SCALE GENOMIC DNA]</scope>
    <scope>GENOME REANNOTATION</scope>
    <source>
        <strain>ATCC BAA-935 / AF2122/97</strain>
    </source>
</reference>
<name>Y1459_MYCBO</name>
<proteinExistence type="predicted"/>
<gene>
    <name type="ordered locus">BQ2027_MB1459C</name>
</gene>